<gene>
    <name evidence="1" type="primary">rlmL</name>
    <name type="ordered locus">Shewmr7_1607</name>
</gene>
<evidence type="ECO:0000255" key="1">
    <source>
        <dbReference type="HAMAP-Rule" id="MF_01858"/>
    </source>
</evidence>
<comment type="function">
    <text evidence="1">Specifically methylates the guanine in position 2445 (m2G2445) and the guanine in position 2069 (m7G2069) of 23S rRNA.</text>
</comment>
<comment type="catalytic activity">
    <reaction evidence="1">
        <text>guanosine(2445) in 23S rRNA + S-adenosyl-L-methionine = N(2)-methylguanosine(2445) in 23S rRNA + S-adenosyl-L-homocysteine + H(+)</text>
        <dbReference type="Rhea" id="RHEA:42740"/>
        <dbReference type="Rhea" id="RHEA-COMP:10215"/>
        <dbReference type="Rhea" id="RHEA-COMP:10216"/>
        <dbReference type="ChEBI" id="CHEBI:15378"/>
        <dbReference type="ChEBI" id="CHEBI:57856"/>
        <dbReference type="ChEBI" id="CHEBI:59789"/>
        <dbReference type="ChEBI" id="CHEBI:74269"/>
        <dbReference type="ChEBI" id="CHEBI:74481"/>
        <dbReference type="EC" id="2.1.1.173"/>
    </reaction>
</comment>
<comment type="catalytic activity">
    <reaction evidence="1">
        <text>guanosine(2069) in 23S rRNA + S-adenosyl-L-methionine = N(2)-methylguanosine(2069) in 23S rRNA + S-adenosyl-L-homocysteine + H(+)</text>
        <dbReference type="Rhea" id="RHEA:43772"/>
        <dbReference type="Rhea" id="RHEA-COMP:10688"/>
        <dbReference type="Rhea" id="RHEA-COMP:10689"/>
        <dbReference type="ChEBI" id="CHEBI:15378"/>
        <dbReference type="ChEBI" id="CHEBI:57856"/>
        <dbReference type="ChEBI" id="CHEBI:59789"/>
        <dbReference type="ChEBI" id="CHEBI:74269"/>
        <dbReference type="ChEBI" id="CHEBI:74481"/>
        <dbReference type="EC" id="2.1.1.264"/>
    </reaction>
</comment>
<comment type="subcellular location">
    <subcellularLocation>
        <location evidence="1">Cytoplasm</location>
    </subcellularLocation>
</comment>
<comment type="similarity">
    <text evidence="1">Belongs to the methyltransferase superfamily. RlmKL family.</text>
</comment>
<sequence>MLNFFAAAPKGFEYSLAQELTEFGATEIKESVAGVYFTAPLALAYRITLWTRLASRIVLVIYKGPCESAEQLYNAAYCIDWSAHFSNRNTFSIDFHGTGGFINNTQFGALKIKDAIVDRFRDDGDARPNVARIDADIKIDAHFRNGVITIAMNFSGPSLHQRGYRSTTGEAPLKENLAANMLVRSGWKAAPTTLLDPFCGSGTVLIEAALMAADIAPGLQRSRFGFEHWRRHDKATWHEILEEAKARASLGVKRCDVKFYGSDIDSRLVALAKRNAQNAGVLELIDFKVANALNVEPPAGEGYLITNPPYGERLGSVSELLQLYYQLGDKFKKEFGGWKVAMLCSDIELISALKLKADKQMKMFNGALECAFNLYTLHAQSTRRDTPVLPEGVDIADIAPAFANRIKKNAKQLEKWAKKEGIDSYRLYDADIPEYNVAVDRYLDHIVVQEYMAPASIPEAVTKRRLSDVLLALPAAIGVDPHKITMKTRERQKGTNQYQKLDERKLELITTEYGAKFKLNLTGYLDTGLFLDHRLTRRLVGQKSKGRRVLNLFSYTGSASVHAALGGAKSVTTVDMSNTYLAWAKENFALNDLSGKQYEFVQADCLQWIRDSALDKSAQYDLIFIDPPTFSNSKRMEDSFDVQRDHVNLLGMLIKLLSPNGEIVFSNNKRKFKMDTETLAKMKIKVENIDDLTLPMDYKRNPHIHNTWLITHA</sequence>
<proteinExistence type="inferred from homology"/>
<keyword id="KW-0963">Cytoplasm</keyword>
<keyword id="KW-0489">Methyltransferase</keyword>
<keyword id="KW-0694">RNA-binding</keyword>
<keyword id="KW-0698">rRNA processing</keyword>
<keyword id="KW-0949">S-adenosyl-L-methionine</keyword>
<keyword id="KW-0808">Transferase</keyword>
<organism>
    <name type="scientific">Shewanella sp. (strain MR-7)</name>
    <dbReference type="NCBI Taxonomy" id="60481"/>
    <lineage>
        <taxon>Bacteria</taxon>
        <taxon>Pseudomonadati</taxon>
        <taxon>Pseudomonadota</taxon>
        <taxon>Gammaproteobacteria</taxon>
        <taxon>Alteromonadales</taxon>
        <taxon>Shewanellaceae</taxon>
        <taxon>Shewanella</taxon>
    </lineage>
</organism>
<name>RLMKL_SHESR</name>
<protein>
    <recommendedName>
        <fullName evidence="1">Ribosomal RNA large subunit methyltransferase K/L</fullName>
    </recommendedName>
    <domain>
        <recommendedName>
            <fullName evidence="1">23S rRNA m2G2445 methyltransferase</fullName>
            <ecNumber evidence="1">2.1.1.173</ecNumber>
        </recommendedName>
        <alternativeName>
            <fullName evidence="1">rRNA (guanine-N(2)-)-methyltransferase RlmL</fullName>
        </alternativeName>
    </domain>
    <domain>
        <recommendedName>
            <fullName evidence="1">23S rRNA m7G2069 methyltransferase</fullName>
            <ecNumber evidence="1">2.1.1.264</ecNumber>
        </recommendedName>
        <alternativeName>
            <fullName evidence="1">rRNA (guanine-N(7)-)-methyltransferase RlmK</fullName>
        </alternativeName>
    </domain>
</protein>
<dbReference type="EC" id="2.1.1.173" evidence="1"/>
<dbReference type="EC" id="2.1.1.264" evidence="1"/>
<dbReference type="EMBL" id="CP000444">
    <property type="protein sequence ID" value="ABI42605.1"/>
    <property type="molecule type" value="Genomic_DNA"/>
</dbReference>
<dbReference type="SMR" id="Q0HWA0"/>
<dbReference type="KEGG" id="shm:Shewmr7_1607"/>
<dbReference type="HOGENOM" id="CLU_014042_2_0_6"/>
<dbReference type="GO" id="GO:0005737">
    <property type="term" value="C:cytoplasm"/>
    <property type="evidence" value="ECO:0007669"/>
    <property type="project" value="UniProtKB-SubCell"/>
</dbReference>
<dbReference type="GO" id="GO:0052915">
    <property type="term" value="F:23S rRNA (guanine(2445)-N(2))-methyltransferase activity"/>
    <property type="evidence" value="ECO:0007669"/>
    <property type="project" value="UniProtKB-UniRule"/>
</dbReference>
<dbReference type="GO" id="GO:0003723">
    <property type="term" value="F:RNA binding"/>
    <property type="evidence" value="ECO:0007669"/>
    <property type="project" value="UniProtKB-KW"/>
</dbReference>
<dbReference type="GO" id="GO:0070043">
    <property type="term" value="F:rRNA (guanine-N7-)-methyltransferase activity"/>
    <property type="evidence" value="ECO:0007669"/>
    <property type="project" value="UniProtKB-UniRule"/>
</dbReference>
<dbReference type="CDD" id="cd02440">
    <property type="entry name" value="AdoMet_MTases"/>
    <property type="match status" value="1"/>
</dbReference>
<dbReference type="CDD" id="cd11715">
    <property type="entry name" value="THUMP_AdoMetMT"/>
    <property type="match status" value="1"/>
</dbReference>
<dbReference type="FunFam" id="3.40.50.150:FF:000039">
    <property type="entry name" value="Ribosomal RNA large subunit methyltransferase K/L"/>
    <property type="match status" value="1"/>
</dbReference>
<dbReference type="Gene3D" id="3.30.2130.30">
    <property type="match status" value="1"/>
</dbReference>
<dbReference type="Gene3D" id="3.30.750.80">
    <property type="entry name" value="RNA methyltransferase domain (HRMD) like"/>
    <property type="match status" value="1"/>
</dbReference>
<dbReference type="Gene3D" id="3.40.50.150">
    <property type="entry name" value="Vaccinia Virus protein VP39"/>
    <property type="match status" value="2"/>
</dbReference>
<dbReference type="HAMAP" id="MF_01858">
    <property type="entry name" value="23SrRNA_methyltr_KL"/>
    <property type="match status" value="1"/>
</dbReference>
<dbReference type="InterPro" id="IPR017244">
    <property type="entry name" value="23SrRNA_methyltr_KL"/>
</dbReference>
<dbReference type="InterPro" id="IPR000241">
    <property type="entry name" value="RlmKL-like_Mtase"/>
</dbReference>
<dbReference type="InterPro" id="IPR053943">
    <property type="entry name" value="RlmKL-like_Mtase_CS"/>
</dbReference>
<dbReference type="InterPro" id="IPR054170">
    <property type="entry name" value="RlmL_1st"/>
</dbReference>
<dbReference type="InterPro" id="IPR019614">
    <property type="entry name" value="SAM-dep_methyl-trfase"/>
</dbReference>
<dbReference type="InterPro" id="IPR029063">
    <property type="entry name" value="SAM-dependent_MTases_sf"/>
</dbReference>
<dbReference type="InterPro" id="IPR004114">
    <property type="entry name" value="THUMP_dom"/>
</dbReference>
<dbReference type="NCBIfam" id="NF008748">
    <property type="entry name" value="PRK11783.1"/>
    <property type="match status" value="1"/>
</dbReference>
<dbReference type="PANTHER" id="PTHR47313">
    <property type="entry name" value="RIBOSOMAL RNA LARGE SUBUNIT METHYLTRANSFERASE K/L"/>
    <property type="match status" value="1"/>
</dbReference>
<dbReference type="PANTHER" id="PTHR47313:SF1">
    <property type="entry name" value="RIBOSOMAL RNA LARGE SUBUNIT METHYLTRANSFERASE K_L"/>
    <property type="match status" value="1"/>
</dbReference>
<dbReference type="Pfam" id="PF10672">
    <property type="entry name" value="Methyltrans_SAM"/>
    <property type="match status" value="1"/>
</dbReference>
<dbReference type="Pfam" id="PF22020">
    <property type="entry name" value="RlmL_1st"/>
    <property type="match status" value="1"/>
</dbReference>
<dbReference type="Pfam" id="PF02926">
    <property type="entry name" value="THUMP"/>
    <property type="match status" value="1"/>
</dbReference>
<dbReference type="Pfam" id="PF01170">
    <property type="entry name" value="UPF0020"/>
    <property type="match status" value="1"/>
</dbReference>
<dbReference type="PIRSF" id="PIRSF037618">
    <property type="entry name" value="RNA_Mtase_bacteria_prd"/>
    <property type="match status" value="1"/>
</dbReference>
<dbReference type="SMART" id="SM00981">
    <property type="entry name" value="THUMP"/>
    <property type="match status" value="1"/>
</dbReference>
<dbReference type="SUPFAM" id="SSF53335">
    <property type="entry name" value="S-adenosyl-L-methionine-dependent methyltransferases"/>
    <property type="match status" value="2"/>
</dbReference>
<dbReference type="PROSITE" id="PS51165">
    <property type="entry name" value="THUMP"/>
    <property type="match status" value="1"/>
</dbReference>
<dbReference type="PROSITE" id="PS01261">
    <property type="entry name" value="UPF0020"/>
    <property type="match status" value="1"/>
</dbReference>
<reference key="1">
    <citation type="submission" date="2006-08" db="EMBL/GenBank/DDBJ databases">
        <title>Complete sequence of chromosome 1 of Shewanella sp. MR-7.</title>
        <authorList>
            <person name="Copeland A."/>
            <person name="Lucas S."/>
            <person name="Lapidus A."/>
            <person name="Barry K."/>
            <person name="Detter J.C."/>
            <person name="Glavina del Rio T."/>
            <person name="Hammon N."/>
            <person name="Israni S."/>
            <person name="Dalin E."/>
            <person name="Tice H."/>
            <person name="Pitluck S."/>
            <person name="Kiss H."/>
            <person name="Brettin T."/>
            <person name="Bruce D."/>
            <person name="Han C."/>
            <person name="Tapia R."/>
            <person name="Gilna P."/>
            <person name="Schmutz J."/>
            <person name="Larimer F."/>
            <person name="Land M."/>
            <person name="Hauser L."/>
            <person name="Kyrpides N."/>
            <person name="Mikhailova N."/>
            <person name="Nealson K."/>
            <person name="Konstantinidis K."/>
            <person name="Klappenbach J."/>
            <person name="Tiedje J."/>
            <person name="Richardson P."/>
        </authorList>
    </citation>
    <scope>NUCLEOTIDE SEQUENCE [LARGE SCALE GENOMIC DNA]</scope>
    <source>
        <strain>MR-7</strain>
    </source>
</reference>
<feature type="chain" id="PRO_0000366833" description="Ribosomal RNA large subunit methyltransferase K/L">
    <location>
        <begin position="1"/>
        <end position="713"/>
    </location>
</feature>
<feature type="domain" description="THUMP" evidence="1">
    <location>
        <begin position="43"/>
        <end position="154"/>
    </location>
</feature>
<accession>Q0HWA0</accession>